<accession>Q9Y0V2</accession>
<accession>Q5FC56</accession>
<organism>
    <name type="scientific">Caenorhabditis elegans</name>
    <dbReference type="NCBI Taxonomy" id="6239"/>
    <lineage>
        <taxon>Eukaryota</taxon>
        <taxon>Metazoa</taxon>
        <taxon>Ecdysozoa</taxon>
        <taxon>Nematoda</taxon>
        <taxon>Chromadorea</taxon>
        <taxon>Rhabditida</taxon>
        <taxon>Rhabditina</taxon>
        <taxon>Rhabditomorpha</taxon>
        <taxon>Rhabditoidea</taxon>
        <taxon>Rhabditidae</taxon>
        <taxon>Peloderinae</taxon>
        <taxon>Caenorhabditis</taxon>
    </lineage>
</organism>
<name>T10B_CAEEL</name>
<reference key="1">
    <citation type="journal article" date="1999" name="FEBS Lett.">
        <title>The mitochondrial TIM22 preprotein translocase is highly conserved throughout the eukaryotic kingdom.</title>
        <authorList>
            <person name="Bauer M.F."/>
            <person name="Rothbauer U."/>
            <person name="Muehlenbein N."/>
            <person name="Smith R.J.H."/>
            <person name="Gerbitz K.-D."/>
            <person name="Neupert W."/>
            <person name="Brunner M."/>
            <person name="Hofmann S."/>
        </authorList>
    </citation>
    <scope>NUCLEOTIDE SEQUENCE [MRNA]</scope>
</reference>
<reference key="2">
    <citation type="journal article" date="1998" name="Science">
        <title>Genome sequence of the nematode C. elegans: a platform for investigating biology.</title>
        <authorList>
            <consortium name="The C. elegans sequencing consortium"/>
        </authorList>
    </citation>
    <scope>NUCLEOTIDE SEQUENCE [LARGE SCALE GENOMIC DNA]</scope>
    <source>
        <strain>Bristol N2</strain>
    </source>
</reference>
<reference key="3">
    <citation type="journal article" date="2004" name="J. Biol. Chem.">
        <title>Defective mitochondrial protein translocation precludes normal Caenorhabditis elegans development.</title>
        <authorList>
            <person name="Curran S.P."/>
            <person name="Leverich E.P."/>
            <person name="Koehler C.M."/>
            <person name="Larsen P.L."/>
        </authorList>
    </citation>
    <scope>SUBCELLULAR LOCATION</scope>
    <scope>FUNCTION</scope>
    <scope>DISRUPTION PHENOTYPE</scope>
</reference>
<dbReference type="EMBL" id="AF150109">
    <property type="protein sequence ID" value="AAD40015.1"/>
    <property type="molecule type" value="mRNA"/>
</dbReference>
<dbReference type="EMBL" id="Z73422">
    <property type="protein sequence ID" value="CAI46556.1"/>
    <property type="molecule type" value="Genomic_DNA"/>
</dbReference>
<dbReference type="RefSeq" id="NP_001021275.1">
    <property type="nucleotide sequence ID" value="NM_001026104.4"/>
</dbReference>
<dbReference type="RefSeq" id="NP_001379430.1">
    <property type="nucleotide sequence ID" value="NM_001392423.1"/>
</dbReference>
<dbReference type="SMR" id="Q9Y0V2"/>
<dbReference type="FunCoup" id="Q9Y0V2">
    <property type="interactions" value="444"/>
</dbReference>
<dbReference type="IntAct" id="Q9Y0V2">
    <property type="interactions" value="1"/>
</dbReference>
<dbReference type="STRING" id="6239.B0564.1b.2"/>
<dbReference type="PaxDb" id="6239-B0564.1b.2"/>
<dbReference type="PeptideAtlas" id="Q9Y0V2"/>
<dbReference type="EnsemblMetazoa" id="B0564.1b.1">
    <property type="protein sequence ID" value="B0564.1b.1"/>
    <property type="gene ID" value="WBGene00044083"/>
</dbReference>
<dbReference type="EnsemblMetazoa" id="B0564.1b.2">
    <property type="protein sequence ID" value="B0564.1b.2"/>
    <property type="gene ID" value="WBGene00044083"/>
</dbReference>
<dbReference type="GeneID" id="24105311"/>
<dbReference type="UCSC" id="B0564.1b.1">
    <property type="organism name" value="c. elegans"/>
</dbReference>
<dbReference type="AGR" id="WB:WBGene00044083"/>
<dbReference type="WormBase" id="B0564.1b">
    <property type="protein sequence ID" value="CE37950"/>
    <property type="gene ID" value="WBGene00044083"/>
    <property type="gene designation" value="tin-9.2"/>
</dbReference>
<dbReference type="eggNOG" id="ENOG502SGVK">
    <property type="taxonomic scope" value="Eukaryota"/>
</dbReference>
<dbReference type="HOGENOM" id="CLU_2199383_0_0_1"/>
<dbReference type="InParanoid" id="Q9Y0V2"/>
<dbReference type="OMA" id="IMTERCF"/>
<dbReference type="PhylomeDB" id="Q9Y0V2"/>
<dbReference type="PRO" id="PR:Q9Y0V2"/>
<dbReference type="Proteomes" id="UP000001940">
    <property type="component" value="Chromosome IV"/>
</dbReference>
<dbReference type="Bgee" id="WBGene00044083">
    <property type="expression patterns" value="Expressed in germ line (C elegans) and 4 other cell types or tissues"/>
</dbReference>
<dbReference type="ExpressionAtlas" id="Q9Y0V2">
    <property type="expression patterns" value="baseline and differential"/>
</dbReference>
<dbReference type="GO" id="GO:0005743">
    <property type="term" value="C:mitochondrial inner membrane"/>
    <property type="evidence" value="ECO:0007669"/>
    <property type="project" value="UniProtKB-SubCell"/>
</dbReference>
<dbReference type="GO" id="GO:0005739">
    <property type="term" value="C:mitochondrion"/>
    <property type="evidence" value="ECO:0000314"/>
    <property type="project" value="WormBase"/>
</dbReference>
<dbReference type="GO" id="GO:0046872">
    <property type="term" value="F:metal ion binding"/>
    <property type="evidence" value="ECO:0007669"/>
    <property type="project" value="UniProtKB-KW"/>
</dbReference>
<dbReference type="GO" id="GO:0040039">
    <property type="term" value="P:inductive cell migration"/>
    <property type="evidence" value="ECO:0000315"/>
    <property type="project" value="WormBase"/>
</dbReference>
<dbReference type="GO" id="GO:0015031">
    <property type="term" value="P:protein transport"/>
    <property type="evidence" value="ECO:0007669"/>
    <property type="project" value="UniProtKB-KW"/>
</dbReference>
<dbReference type="GO" id="GO:0040014">
    <property type="term" value="P:regulation of multicellular organism growth"/>
    <property type="evidence" value="ECO:0000315"/>
    <property type="project" value="WormBase"/>
</dbReference>
<dbReference type="FunFam" id="1.10.287.810:FF:000019">
    <property type="match status" value="1"/>
</dbReference>
<dbReference type="Gene3D" id="1.10.287.810">
    <property type="entry name" value="Mitochondrial import inner membrane translocase subunit tim13 like domains"/>
    <property type="match status" value="1"/>
</dbReference>
<dbReference type="InterPro" id="IPR050673">
    <property type="entry name" value="Mito_inner_translocase_sub"/>
</dbReference>
<dbReference type="InterPro" id="IPR004217">
    <property type="entry name" value="Tim10-like"/>
</dbReference>
<dbReference type="InterPro" id="IPR035427">
    <property type="entry name" value="Tim10-like_dom_sf"/>
</dbReference>
<dbReference type="PANTHER" id="PTHR13172">
    <property type="entry name" value="MITOCHONDRIAL IMPORT INNER MEMBRANE TRANSLOCASE SUBUNIT TIM9B"/>
    <property type="match status" value="1"/>
</dbReference>
<dbReference type="Pfam" id="PF02953">
    <property type="entry name" value="zf-Tim10_DDP"/>
    <property type="match status" value="1"/>
</dbReference>
<dbReference type="SUPFAM" id="SSF144122">
    <property type="entry name" value="Tim10-like"/>
    <property type="match status" value="1"/>
</dbReference>
<keyword id="KW-1015">Disulfide bond</keyword>
<keyword id="KW-0472">Membrane</keyword>
<keyword id="KW-0479">Metal-binding</keyword>
<keyword id="KW-0496">Mitochondrion</keyword>
<keyword id="KW-0999">Mitochondrion inner membrane</keyword>
<keyword id="KW-0653">Protein transport</keyword>
<keyword id="KW-1185">Reference proteome</keyword>
<keyword id="KW-0811">Translocation</keyword>
<keyword id="KW-0813">Transport</keyword>
<keyword id="KW-0862">Zinc</keyword>
<comment type="function">
    <text evidence="1 3">Component of the TIM22 complex, a complex that mediates the import and insertion of multi-pass transmembrane proteins into the mitochondrial inner membrane. The TIM22 complex forms a twin-pore translocase that uses the membrane potential as the external driving force. In the TIM22 complex, it may act as a docking point for the soluble 70 kDa complex that guides the target proteins in transit through the aqueous mitochondrial intermembrane space (By similarity).</text>
</comment>
<comment type="subunit">
    <text evidence="1">Component of the TIM22 complex, whose core is composed of tim-22, associated with peripheral protein tin-9.2/tim-10b and the 70 kDa heterohexamer. In most cases, the 70 kDa complex is composed of TIMM9 and TIMM10 (By similarity).</text>
</comment>
<comment type="subcellular location">
    <subcellularLocation>
        <location evidence="3">Mitochondrion inner membrane</location>
        <topology evidence="3">Peripheral membrane protein</topology>
    </subcellularLocation>
</comment>
<comment type="domain">
    <text evidence="1">The twin CX3C motif contains 4 conserved Cys residues that form 2 disulfide bonds in the mitochondrial intermembrane space. However, during the transit of tin-9.2/tim-10b from the cytoplasm into the mitochondrion, the Cys residues probably coordinate zinc, thereby preventing folding and allowing its transfer across the mitochondrial outer membrane (By similarity).</text>
</comment>
<comment type="disruption phenotype">
    <text evidence="3">Worms display a small body size, a reduced number of progeny, partial embryonic lethality and defective formation of the somatic gonad due to defects in import of proteins into mitochondria.</text>
</comment>
<comment type="similarity">
    <text evidence="4">Belongs to the small Tim family.</text>
</comment>
<gene>
    <name type="primary">tin-9.2</name>
    <name type="synonym">tim-9b</name>
    <name type="ORF">B0564.1</name>
</gene>
<proteinExistence type="inferred from homology"/>
<sequence>MNTIQNIQQLREFLTVYNTLSERCFNACARDYTTSTLTKDEGSCVSQCIDKQMLVNRRFMLVFAEQAPKALFKQGEQSPTEAIKSAKPEPAVPAPEATPVETTPVIEENKQ</sequence>
<evidence type="ECO:0000250" key="1"/>
<evidence type="ECO:0000256" key="2">
    <source>
        <dbReference type="SAM" id="MobiDB-lite"/>
    </source>
</evidence>
<evidence type="ECO:0000269" key="3">
    <source>
    </source>
</evidence>
<evidence type="ECO:0000305" key="4"/>
<feature type="chain" id="PRO_0000193602" description="Mitochondrial import inner membrane translocase subunit Tim10B">
    <location>
        <begin position="1"/>
        <end position="111"/>
    </location>
</feature>
<feature type="region of interest" description="Disordered" evidence="2">
    <location>
        <begin position="73"/>
        <end position="111"/>
    </location>
</feature>
<feature type="short sequence motif" description="Twin CX3C motif">
    <location>
        <begin position="24"/>
        <end position="48"/>
    </location>
</feature>
<feature type="compositionally biased region" description="Low complexity" evidence="2">
    <location>
        <begin position="94"/>
        <end position="105"/>
    </location>
</feature>
<feature type="disulfide bond" evidence="1">
    <location>
        <begin position="24"/>
        <end position="48"/>
    </location>
</feature>
<feature type="disulfide bond" evidence="1">
    <location>
        <begin position="28"/>
        <end position="44"/>
    </location>
</feature>
<protein>
    <recommendedName>
        <fullName>Mitochondrial import inner membrane translocase subunit Tim10B</fullName>
    </recommendedName>
    <alternativeName>
        <fullName>Mitochondrial import inner membrane translocase subunit Tim9B</fullName>
    </alternativeName>
    <alternativeName>
        <fullName>Tim-10b</fullName>
    </alternativeName>
    <alternativeName>
        <fullName>Tim10b</fullName>
    </alternativeName>
</protein>